<comment type="function">
    <text evidence="1">Catalyzes the last two sequential reactions in the de novo biosynthetic pathway for UDP-N-acetylglucosamine (UDP-GlcNAc). The C-terminal domain catalyzes the transfer of acetyl group from acetyl coenzyme A to glucosamine-1-phosphate (GlcN-1-P) to produce N-acetylglucosamine-1-phosphate (GlcNAc-1-P), which is converted into UDP-GlcNAc by the transfer of uridine 5-monophosphate (from uridine 5-triphosphate), a reaction catalyzed by the N-terminal domain.</text>
</comment>
<comment type="catalytic activity">
    <reaction evidence="1">
        <text>alpha-D-glucosamine 1-phosphate + acetyl-CoA = N-acetyl-alpha-D-glucosamine 1-phosphate + CoA + H(+)</text>
        <dbReference type="Rhea" id="RHEA:13725"/>
        <dbReference type="ChEBI" id="CHEBI:15378"/>
        <dbReference type="ChEBI" id="CHEBI:57287"/>
        <dbReference type="ChEBI" id="CHEBI:57288"/>
        <dbReference type="ChEBI" id="CHEBI:57776"/>
        <dbReference type="ChEBI" id="CHEBI:58516"/>
        <dbReference type="EC" id="2.3.1.157"/>
    </reaction>
</comment>
<comment type="catalytic activity">
    <reaction evidence="1">
        <text>N-acetyl-alpha-D-glucosamine 1-phosphate + UTP + H(+) = UDP-N-acetyl-alpha-D-glucosamine + diphosphate</text>
        <dbReference type="Rhea" id="RHEA:13509"/>
        <dbReference type="ChEBI" id="CHEBI:15378"/>
        <dbReference type="ChEBI" id="CHEBI:33019"/>
        <dbReference type="ChEBI" id="CHEBI:46398"/>
        <dbReference type="ChEBI" id="CHEBI:57705"/>
        <dbReference type="ChEBI" id="CHEBI:57776"/>
        <dbReference type="EC" id="2.7.7.23"/>
    </reaction>
</comment>
<comment type="cofactor">
    <cofactor evidence="1">
        <name>Mg(2+)</name>
        <dbReference type="ChEBI" id="CHEBI:18420"/>
    </cofactor>
    <text evidence="1">Binds 1 Mg(2+) ion per subunit.</text>
</comment>
<comment type="pathway">
    <text evidence="1">Nucleotide-sugar biosynthesis; UDP-N-acetyl-alpha-D-glucosamine biosynthesis; N-acetyl-alpha-D-glucosamine 1-phosphate from alpha-D-glucosamine 6-phosphate (route II): step 2/2.</text>
</comment>
<comment type="pathway">
    <text evidence="1">Nucleotide-sugar biosynthesis; UDP-N-acetyl-alpha-D-glucosamine biosynthesis; UDP-N-acetyl-alpha-D-glucosamine from N-acetyl-alpha-D-glucosamine 1-phosphate: step 1/1.</text>
</comment>
<comment type="pathway">
    <text evidence="1">Bacterial outer membrane biogenesis; LPS lipid A biosynthesis.</text>
</comment>
<comment type="subunit">
    <text evidence="1">Homotrimer.</text>
</comment>
<comment type="subcellular location">
    <subcellularLocation>
        <location evidence="1">Cytoplasm</location>
    </subcellularLocation>
</comment>
<comment type="similarity">
    <text evidence="1">In the N-terminal section; belongs to the N-acetylglucosamine-1-phosphate uridyltransferase family.</text>
</comment>
<comment type="similarity">
    <text evidence="1">In the C-terminal section; belongs to the transferase hexapeptide repeat family.</text>
</comment>
<accession>A7GY50</accession>
<sequence>MNDTSIIILAAGLGTRMKSKRPKVLFELCGEPMIIHILKQAYAITNDVGVVLHYEKELISQKIKEIFPQTKIYTQDLENFPGTAGALKNATLSGKKVIVTCGDMPLVRSTDLMRLANADADIAMSCFEAANPFGYGRVIIKGGKVGAIVEQKDASEAELAIKSVNAGCYCFKREILEEILPLIKNKNTQKEFYLTDTIKIANERGFKCVAVNVSEQNFMGINDKFQLSVAEKIMQDEIKQDLMKAGVLMRLPESIFIDSRAKFEGECVLEENVSIMGACHIKESIIKSCSVIEDSVIEGSDIGPLAHIRPKSEIKNTHIGNFVEVKKGVLDGVKAGHLSYLGDCEIASGTNVGCGTITCNYDGKAKYKTTIGKNVFIGSDTQLVAPVNIADDVIIAAGSTITNDVPSGALAISRGKQENKAGFFYKFFGKNNAEK</sequence>
<gene>
    <name evidence="1" type="primary">glmU</name>
    <name type="ordered locus">Ccur92_08380</name>
    <name type="ORF">CCV52592_1268</name>
</gene>
<evidence type="ECO:0000255" key="1">
    <source>
        <dbReference type="HAMAP-Rule" id="MF_01631"/>
    </source>
</evidence>
<protein>
    <recommendedName>
        <fullName evidence="1">Bifunctional protein GlmU</fullName>
    </recommendedName>
    <domain>
        <recommendedName>
            <fullName evidence="1">UDP-N-acetylglucosamine pyrophosphorylase</fullName>
            <ecNumber evidence="1">2.7.7.23</ecNumber>
        </recommendedName>
        <alternativeName>
            <fullName evidence="1">N-acetylglucosamine-1-phosphate uridyltransferase</fullName>
        </alternativeName>
    </domain>
    <domain>
        <recommendedName>
            <fullName evidence="1">Glucosamine-1-phosphate N-acetyltransferase</fullName>
            <ecNumber evidence="1">2.3.1.157</ecNumber>
        </recommendedName>
    </domain>
</protein>
<feature type="chain" id="PRO_1000186420" description="Bifunctional protein GlmU">
    <location>
        <begin position="1"/>
        <end position="435"/>
    </location>
</feature>
<feature type="region of interest" description="Pyrophosphorylase" evidence="1">
    <location>
        <begin position="1"/>
        <end position="224"/>
    </location>
</feature>
<feature type="region of interest" description="Linker" evidence="1">
    <location>
        <begin position="225"/>
        <end position="245"/>
    </location>
</feature>
<feature type="region of interest" description="N-acetyltransferase" evidence="1">
    <location>
        <begin position="246"/>
        <end position="435"/>
    </location>
</feature>
<feature type="active site" description="Proton acceptor" evidence="1">
    <location>
        <position position="337"/>
    </location>
</feature>
<feature type="binding site" evidence="1">
    <location>
        <begin position="9"/>
        <end position="12"/>
    </location>
    <ligand>
        <name>UDP-N-acetyl-alpha-D-glucosamine</name>
        <dbReference type="ChEBI" id="CHEBI:57705"/>
    </ligand>
</feature>
<feature type="binding site" evidence="1">
    <location>
        <position position="23"/>
    </location>
    <ligand>
        <name>UDP-N-acetyl-alpha-D-glucosamine</name>
        <dbReference type="ChEBI" id="CHEBI:57705"/>
    </ligand>
</feature>
<feature type="binding site" evidence="1">
    <location>
        <position position="75"/>
    </location>
    <ligand>
        <name>UDP-N-acetyl-alpha-D-glucosamine</name>
        <dbReference type="ChEBI" id="CHEBI:57705"/>
    </ligand>
</feature>
<feature type="binding site" evidence="1">
    <location>
        <begin position="82"/>
        <end position="83"/>
    </location>
    <ligand>
        <name>UDP-N-acetyl-alpha-D-glucosamine</name>
        <dbReference type="ChEBI" id="CHEBI:57705"/>
    </ligand>
</feature>
<feature type="binding site" evidence="1">
    <location>
        <position position="103"/>
    </location>
    <ligand>
        <name>Mg(2+)</name>
        <dbReference type="ChEBI" id="CHEBI:18420"/>
    </ligand>
</feature>
<feature type="binding site" evidence="1">
    <location>
        <position position="136"/>
    </location>
    <ligand>
        <name>UDP-N-acetyl-alpha-D-glucosamine</name>
        <dbReference type="ChEBI" id="CHEBI:57705"/>
    </ligand>
</feature>
<feature type="binding site" evidence="1">
    <location>
        <position position="150"/>
    </location>
    <ligand>
        <name>UDP-N-acetyl-alpha-D-glucosamine</name>
        <dbReference type="ChEBI" id="CHEBI:57705"/>
    </ligand>
</feature>
<feature type="binding site" evidence="1">
    <location>
        <position position="165"/>
    </location>
    <ligand>
        <name>UDP-N-acetyl-alpha-D-glucosamine</name>
        <dbReference type="ChEBI" id="CHEBI:57705"/>
    </ligand>
</feature>
<feature type="binding site" evidence="1">
    <location>
        <position position="222"/>
    </location>
    <ligand>
        <name>Mg(2+)</name>
        <dbReference type="ChEBI" id="CHEBI:18420"/>
    </ligand>
</feature>
<feature type="binding site" evidence="1">
    <location>
        <position position="222"/>
    </location>
    <ligand>
        <name>UDP-N-acetyl-alpha-D-glucosamine</name>
        <dbReference type="ChEBI" id="CHEBI:57705"/>
    </ligand>
</feature>
<feature type="binding site" evidence="1">
    <location>
        <position position="309"/>
    </location>
    <ligand>
        <name>UDP-N-acetyl-alpha-D-glucosamine</name>
        <dbReference type="ChEBI" id="CHEBI:57705"/>
    </ligand>
</feature>
<feature type="binding site" evidence="1">
    <location>
        <position position="326"/>
    </location>
    <ligand>
        <name>UDP-N-acetyl-alpha-D-glucosamine</name>
        <dbReference type="ChEBI" id="CHEBI:57705"/>
    </ligand>
</feature>
<feature type="binding site" evidence="1">
    <location>
        <position position="340"/>
    </location>
    <ligand>
        <name>UDP-N-acetyl-alpha-D-glucosamine</name>
        <dbReference type="ChEBI" id="CHEBI:57705"/>
    </ligand>
</feature>
<feature type="binding site" evidence="1">
    <location>
        <position position="351"/>
    </location>
    <ligand>
        <name>UDP-N-acetyl-alpha-D-glucosamine</name>
        <dbReference type="ChEBI" id="CHEBI:57705"/>
    </ligand>
</feature>
<feature type="binding site" evidence="1">
    <location>
        <begin position="360"/>
        <end position="361"/>
    </location>
    <ligand>
        <name>acetyl-CoA</name>
        <dbReference type="ChEBI" id="CHEBI:57288"/>
    </ligand>
</feature>
<feature type="binding site" evidence="1">
    <location>
        <position position="379"/>
    </location>
    <ligand>
        <name>acetyl-CoA</name>
        <dbReference type="ChEBI" id="CHEBI:57288"/>
    </ligand>
</feature>
<feature type="binding site" evidence="1">
    <location>
        <position position="397"/>
    </location>
    <ligand>
        <name>acetyl-CoA</name>
        <dbReference type="ChEBI" id="CHEBI:57288"/>
    </ligand>
</feature>
<feature type="binding site" evidence="1">
    <location>
        <position position="414"/>
    </location>
    <ligand>
        <name>acetyl-CoA</name>
        <dbReference type="ChEBI" id="CHEBI:57288"/>
    </ligand>
</feature>
<dbReference type="EC" id="2.7.7.23" evidence="1"/>
<dbReference type="EC" id="2.3.1.157" evidence="1"/>
<dbReference type="EMBL" id="CP000767">
    <property type="protein sequence ID" value="EAU00200.1"/>
    <property type="molecule type" value="Genomic_DNA"/>
</dbReference>
<dbReference type="RefSeq" id="WP_011992207.1">
    <property type="nucleotide sequence ID" value="NC_009715.2"/>
</dbReference>
<dbReference type="SMR" id="A7GY50"/>
<dbReference type="STRING" id="360105.CCV52592_1268"/>
<dbReference type="KEGG" id="ccv:CCV52592_1268"/>
<dbReference type="HOGENOM" id="CLU_029499_15_2_7"/>
<dbReference type="OrthoDB" id="9775031at2"/>
<dbReference type="UniPathway" id="UPA00113">
    <property type="reaction ID" value="UER00532"/>
</dbReference>
<dbReference type="UniPathway" id="UPA00113">
    <property type="reaction ID" value="UER00533"/>
</dbReference>
<dbReference type="UniPathway" id="UPA00973"/>
<dbReference type="Proteomes" id="UP000006380">
    <property type="component" value="Chromosome"/>
</dbReference>
<dbReference type="GO" id="GO:0005737">
    <property type="term" value="C:cytoplasm"/>
    <property type="evidence" value="ECO:0007669"/>
    <property type="project" value="UniProtKB-SubCell"/>
</dbReference>
<dbReference type="GO" id="GO:0016020">
    <property type="term" value="C:membrane"/>
    <property type="evidence" value="ECO:0007669"/>
    <property type="project" value="GOC"/>
</dbReference>
<dbReference type="GO" id="GO:0019134">
    <property type="term" value="F:glucosamine-1-phosphate N-acetyltransferase activity"/>
    <property type="evidence" value="ECO:0007669"/>
    <property type="project" value="UniProtKB-UniRule"/>
</dbReference>
<dbReference type="GO" id="GO:0000287">
    <property type="term" value="F:magnesium ion binding"/>
    <property type="evidence" value="ECO:0007669"/>
    <property type="project" value="UniProtKB-UniRule"/>
</dbReference>
<dbReference type="GO" id="GO:0003977">
    <property type="term" value="F:UDP-N-acetylglucosamine diphosphorylase activity"/>
    <property type="evidence" value="ECO:0007669"/>
    <property type="project" value="UniProtKB-UniRule"/>
</dbReference>
<dbReference type="GO" id="GO:0000902">
    <property type="term" value="P:cell morphogenesis"/>
    <property type="evidence" value="ECO:0007669"/>
    <property type="project" value="UniProtKB-UniRule"/>
</dbReference>
<dbReference type="GO" id="GO:0071555">
    <property type="term" value="P:cell wall organization"/>
    <property type="evidence" value="ECO:0007669"/>
    <property type="project" value="UniProtKB-KW"/>
</dbReference>
<dbReference type="GO" id="GO:0009245">
    <property type="term" value="P:lipid A biosynthetic process"/>
    <property type="evidence" value="ECO:0007669"/>
    <property type="project" value="UniProtKB-UniRule"/>
</dbReference>
<dbReference type="GO" id="GO:0009252">
    <property type="term" value="P:peptidoglycan biosynthetic process"/>
    <property type="evidence" value="ECO:0007669"/>
    <property type="project" value="UniProtKB-UniRule"/>
</dbReference>
<dbReference type="GO" id="GO:0008360">
    <property type="term" value="P:regulation of cell shape"/>
    <property type="evidence" value="ECO:0007669"/>
    <property type="project" value="UniProtKB-KW"/>
</dbReference>
<dbReference type="GO" id="GO:0006048">
    <property type="term" value="P:UDP-N-acetylglucosamine biosynthetic process"/>
    <property type="evidence" value="ECO:0007669"/>
    <property type="project" value="UniProtKB-UniPathway"/>
</dbReference>
<dbReference type="CDD" id="cd02540">
    <property type="entry name" value="GT2_GlmU_N_bac"/>
    <property type="match status" value="1"/>
</dbReference>
<dbReference type="CDD" id="cd03353">
    <property type="entry name" value="LbH_GlmU_C"/>
    <property type="match status" value="1"/>
</dbReference>
<dbReference type="Gene3D" id="2.160.10.10">
    <property type="entry name" value="Hexapeptide repeat proteins"/>
    <property type="match status" value="1"/>
</dbReference>
<dbReference type="Gene3D" id="3.90.550.10">
    <property type="entry name" value="Spore Coat Polysaccharide Biosynthesis Protein SpsA, Chain A"/>
    <property type="match status" value="1"/>
</dbReference>
<dbReference type="HAMAP" id="MF_01631">
    <property type="entry name" value="GlmU"/>
    <property type="match status" value="1"/>
</dbReference>
<dbReference type="InterPro" id="IPR005882">
    <property type="entry name" value="Bifunctional_GlmU"/>
</dbReference>
<dbReference type="InterPro" id="IPR050065">
    <property type="entry name" value="GlmU-like"/>
</dbReference>
<dbReference type="InterPro" id="IPR038009">
    <property type="entry name" value="GlmU_C_LbH"/>
</dbReference>
<dbReference type="InterPro" id="IPR001451">
    <property type="entry name" value="Hexapep"/>
</dbReference>
<dbReference type="InterPro" id="IPR018357">
    <property type="entry name" value="Hexapep_transf_CS"/>
</dbReference>
<dbReference type="InterPro" id="IPR025877">
    <property type="entry name" value="MobA-like_NTP_Trfase"/>
</dbReference>
<dbReference type="InterPro" id="IPR029044">
    <property type="entry name" value="Nucleotide-diphossugar_trans"/>
</dbReference>
<dbReference type="InterPro" id="IPR011004">
    <property type="entry name" value="Trimer_LpxA-like_sf"/>
</dbReference>
<dbReference type="NCBIfam" id="TIGR01173">
    <property type="entry name" value="glmU"/>
    <property type="match status" value="1"/>
</dbReference>
<dbReference type="NCBIfam" id="NF010939">
    <property type="entry name" value="PRK14359.1"/>
    <property type="match status" value="1"/>
</dbReference>
<dbReference type="PANTHER" id="PTHR43584:SF3">
    <property type="entry name" value="BIFUNCTIONAL PROTEIN GLMU"/>
    <property type="match status" value="1"/>
</dbReference>
<dbReference type="PANTHER" id="PTHR43584">
    <property type="entry name" value="NUCLEOTIDYL TRANSFERASE"/>
    <property type="match status" value="1"/>
</dbReference>
<dbReference type="Pfam" id="PF00132">
    <property type="entry name" value="Hexapep"/>
    <property type="match status" value="1"/>
</dbReference>
<dbReference type="Pfam" id="PF12804">
    <property type="entry name" value="NTP_transf_3"/>
    <property type="match status" value="1"/>
</dbReference>
<dbReference type="SUPFAM" id="SSF53448">
    <property type="entry name" value="Nucleotide-diphospho-sugar transferases"/>
    <property type="match status" value="1"/>
</dbReference>
<dbReference type="SUPFAM" id="SSF51161">
    <property type="entry name" value="Trimeric LpxA-like enzymes"/>
    <property type="match status" value="1"/>
</dbReference>
<dbReference type="PROSITE" id="PS00101">
    <property type="entry name" value="HEXAPEP_TRANSFERASES"/>
    <property type="match status" value="1"/>
</dbReference>
<name>GLMU_CAMC5</name>
<keyword id="KW-0012">Acyltransferase</keyword>
<keyword id="KW-0133">Cell shape</keyword>
<keyword id="KW-0961">Cell wall biogenesis/degradation</keyword>
<keyword id="KW-0963">Cytoplasm</keyword>
<keyword id="KW-0460">Magnesium</keyword>
<keyword id="KW-0479">Metal-binding</keyword>
<keyword id="KW-0511">Multifunctional enzyme</keyword>
<keyword id="KW-0548">Nucleotidyltransferase</keyword>
<keyword id="KW-0573">Peptidoglycan synthesis</keyword>
<keyword id="KW-1185">Reference proteome</keyword>
<keyword id="KW-0677">Repeat</keyword>
<keyword id="KW-0808">Transferase</keyword>
<reference key="1">
    <citation type="submission" date="2007-07" db="EMBL/GenBank/DDBJ databases">
        <title>Genome sequence of Campylobacter curvus 525.92 isolated from human feces.</title>
        <authorList>
            <person name="Fouts D.E."/>
            <person name="Mongodin E.F."/>
            <person name="Puiu D."/>
            <person name="Sebastian Y."/>
            <person name="Miller W.G."/>
            <person name="Mandrell R.E."/>
            <person name="Lastovica A.J."/>
            <person name="Nelson K.E."/>
        </authorList>
    </citation>
    <scope>NUCLEOTIDE SEQUENCE [LARGE SCALE GENOMIC DNA]</scope>
    <source>
        <strain>525.92</strain>
    </source>
</reference>
<organism>
    <name type="scientific">Campylobacter curvus (strain 525.92)</name>
    <dbReference type="NCBI Taxonomy" id="360105"/>
    <lineage>
        <taxon>Bacteria</taxon>
        <taxon>Pseudomonadati</taxon>
        <taxon>Campylobacterota</taxon>
        <taxon>Epsilonproteobacteria</taxon>
        <taxon>Campylobacterales</taxon>
        <taxon>Campylobacteraceae</taxon>
        <taxon>Campylobacter</taxon>
    </lineage>
</organism>
<proteinExistence type="inferred from homology"/>